<name>PQQE_METS4</name>
<accession>B0UE13</accession>
<comment type="function">
    <text evidence="1">Catalyzes the cross-linking of a glutamate residue and a tyrosine residue in the PqqA protein as part of the biosynthesis of pyrroloquinoline quinone (PQQ).</text>
</comment>
<comment type="catalytic activity">
    <reaction evidence="1">
        <text>[PQQ precursor protein] + S-adenosyl-L-methionine = E-Y cross-linked-[PQQ precursor protein] + 5'-deoxyadenosine + L-methionine + H(+)</text>
        <dbReference type="Rhea" id="RHEA:56836"/>
        <dbReference type="Rhea" id="RHEA-COMP:14800"/>
        <dbReference type="Rhea" id="RHEA-COMP:14801"/>
        <dbReference type="ChEBI" id="CHEBI:15378"/>
        <dbReference type="ChEBI" id="CHEBI:17319"/>
        <dbReference type="ChEBI" id="CHEBI:57844"/>
        <dbReference type="ChEBI" id="CHEBI:59789"/>
        <dbReference type="ChEBI" id="CHEBI:141026"/>
        <dbReference type="ChEBI" id="CHEBI:141027"/>
        <dbReference type="EC" id="1.21.98.4"/>
    </reaction>
</comment>
<comment type="cofactor">
    <cofactor evidence="1">
        <name>[4Fe-4S] cluster</name>
        <dbReference type="ChEBI" id="CHEBI:49883"/>
    </cofactor>
    <text evidence="1">Binds 1 [4Fe-4S] cluster. The cluster is coordinated with 3 cysteines and an exchangeable S-adenosyl-L-methionine.</text>
</comment>
<comment type="pathway">
    <text evidence="1">Cofactor biosynthesis; pyrroloquinoline quinone biosynthesis.</text>
</comment>
<comment type="subunit">
    <text evidence="1">Interacts with PqqD. The interaction is necessary for activity of PqqE.</text>
</comment>
<comment type="similarity">
    <text evidence="1">Belongs to the radical SAM superfamily. PqqE family.</text>
</comment>
<gene>
    <name evidence="1" type="primary">pqqE</name>
    <name type="ordered locus">M446_5768</name>
</gene>
<evidence type="ECO:0000255" key="1">
    <source>
        <dbReference type="HAMAP-Rule" id="MF_00660"/>
    </source>
</evidence>
<evidence type="ECO:0000255" key="2">
    <source>
        <dbReference type="PROSITE-ProRule" id="PRU01266"/>
    </source>
</evidence>
<proteinExistence type="inferred from homology"/>
<sequence length="379" mass="40493">MTAVTPTLPAPIGLLAELTHRCPLRCPYCSNPLELDKRSAELDTATWQRVLGEAAALGVLHVHLSGGEPTARQDIVEITGACADLGLYSNLITSGVGGALAKLDALSEAGLDHVQLSIQAAEAGNAERIGGLRNAQPQKFAFAERVVALGLPLTLNAVIHRGNIDEVPALIDLAVRLGAKRLEVAHTQYYGWAYVNRAALMPAKPDVDRSIRVVEEARERLKGRLVIDLVVPDYYAKYPKACAGGWGRRLMNVTPSGKVLPCHAAETIPGLAFWNVQERALGDIWANSPAFQAYRGTSWMKEPCRSCDRREKDWGGCRCQALALAGDAAATDPACSLSPLHAKVQALAVAESALETAPDYQYRTIGGAPVVPQPEGVSA</sequence>
<feature type="chain" id="PRO_1000131280" description="PqqA peptide cyclase">
    <location>
        <begin position="1"/>
        <end position="379"/>
    </location>
</feature>
<feature type="domain" description="Radical SAM core" evidence="2">
    <location>
        <begin position="8"/>
        <end position="220"/>
    </location>
</feature>
<feature type="binding site" evidence="1">
    <location>
        <position position="22"/>
    </location>
    <ligand>
        <name>[4Fe-4S] cluster</name>
        <dbReference type="ChEBI" id="CHEBI:49883"/>
        <note>4Fe-4S-S-AdoMet</note>
    </ligand>
</feature>
<feature type="binding site" evidence="1">
    <location>
        <position position="26"/>
    </location>
    <ligand>
        <name>[4Fe-4S] cluster</name>
        <dbReference type="ChEBI" id="CHEBI:49883"/>
        <note>4Fe-4S-S-AdoMet</note>
    </ligand>
</feature>
<feature type="binding site" evidence="1">
    <location>
        <position position="29"/>
    </location>
    <ligand>
        <name>[4Fe-4S] cluster</name>
        <dbReference type="ChEBI" id="CHEBI:49883"/>
        <note>4Fe-4S-S-AdoMet</note>
    </ligand>
</feature>
<organism>
    <name type="scientific">Methylobacterium sp. (strain 4-46)</name>
    <dbReference type="NCBI Taxonomy" id="426117"/>
    <lineage>
        <taxon>Bacteria</taxon>
        <taxon>Pseudomonadati</taxon>
        <taxon>Pseudomonadota</taxon>
        <taxon>Alphaproteobacteria</taxon>
        <taxon>Hyphomicrobiales</taxon>
        <taxon>Methylobacteriaceae</taxon>
        <taxon>Methylobacterium</taxon>
    </lineage>
</organism>
<dbReference type="EC" id="1.21.98.4" evidence="1"/>
<dbReference type="EMBL" id="CP000943">
    <property type="protein sequence ID" value="ACA20056.1"/>
    <property type="molecule type" value="Genomic_DNA"/>
</dbReference>
<dbReference type="RefSeq" id="WP_012335434.1">
    <property type="nucleotide sequence ID" value="NC_010511.1"/>
</dbReference>
<dbReference type="SMR" id="B0UE13"/>
<dbReference type="STRING" id="426117.M446_5768"/>
<dbReference type="KEGG" id="met:M446_5768"/>
<dbReference type="eggNOG" id="COG0535">
    <property type="taxonomic scope" value="Bacteria"/>
</dbReference>
<dbReference type="HOGENOM" id="CLU_009273_4_7_5"/>
<dbReference type="UniPathway" id="UPA00539"/>
<dbReference type="GO" id="GO:0051539">
    <property type="term" value="F:4 iron, 4 sulfur cluster binding"/>
    <property type="evidence" value="ECO:0007669"/>
    <property type="project" value="UniProtKB-KW"/>
</dbReference>
<dbReference type="GO" id="GO:0009975">
    <property type="term" value="F:cyclase activity"/>
    <property type="evidence" value="ECO:0007669"/>
    <property type="project" value="UniProtKB-UniRule"/>
</dbReference>
<dbReference type="GO" id="GO:0005506">
    <property type="term" value="F:iron ion binding"/>
    <property type="evidence" value="ECO:0007669"/>
    <property type="project" value="UniProtKB-UniRule"/>
</dbReference>
<dbReference type="GO" id="GO:0016491">
    <property type="term" value="F:oxidoreductase activity"/>
    <property type="evidence" value="ECO:0007669"/>
    <property type="project" value="UniProtKB-KW"/>
</dbReference>
<dbReference type="GO" id="GO:1904047">
    <property type="term" value="F:S-adenosyl-L-methionine binding"/>
    <property type="evidence" value="ECO:0007669"/>
    <property type="project" value="UniProtKB-UniRule"/>
</dbReference>
<dbReference type="GO" id="GO:0018189">
    <property type="term" value="P:pyrroloquinoline quinone biosynthetic process"/>
    <property type="evidence" value="ECO:0007669"/>
    <property type="project" value="UniProtKB-UniRule"/>
</dbReference>
<dbReference type="CDD" id="cd01335">
    <property type="entry name" value="Radical_SAM"/>
    <property type="match status" value="1"/>
</dbReference>
<dbReference type="CDD" id="cd21119">
    <property type="entry name" value="SPASM_PqqE"/>
    <property type="match status" value="1"/>
</dbReference>
<dbReference type="Gene3D" id="3.20.20.70">
    <property type="entry name" value="Aldolase class I"/>
    <property type="match status" value="1"/>
</dbReference>
<dbReference type="HAMAP" id="MF_00660">
    <property type="entry name" value="PqqE"/>
    <property type="match status" value="1"/>
</dbReference>
<dbReference type="InterPro" id="IPR023885">
    <property type="entry name" value="4Fe4S-binding_SPASM_dom"/>
</dbReference>
<dbReference type="InterPro" id="IPR013785">
    <property type="entry name" value="Aldolase_TIM"/>
</dbReference>
<dbReference type="InterPro" id="IPR000385">
    <property type="entry name" value="MoaA_NifB_PqqE_Fe-S-bd_CS"/>
</dbReference>
<dbReference type="InterPro" id="IPR011843">
    <property type="entry name" value="PQQ_synth_PqqE_bac"/>
</dbReference>
<dbReference type="InterPro" id="IPR017200">
    <property type="entry name" value="PqqE-like"/>
</dbReference>
<dbReference type="InterPro" id="IPR050377">
    <property type="entry name" value="Radical_SAM_PqqE_MftC-like"/>
</dbReference>
<dbReference type="InterPro" id="IPR007197">
    <property type="entry name" value="rSAM"/>
</dbReference>
<dbReference type="NCBIfam" id="TIGR02109">
    <property type="entry name" value="PQQ_syn_pqqE"/>
    <property type="match status" value="1"/>
</dbReference>
<dbReference type="NCBIfam" id="TIGR04085">
    <property type="entry name" value="rSAM_more_4Fe4S"/>
    <property type="match status" value="1"/>
</dbReference>
<dbReference type="PANTHER" id="PTHR11228:SF7">
    <property type="entry name" value="PQQA PEPTIDE CYCLASE"/>
    <property type="match status" value="1"/>
</dbReference>
<dbReference type="PANTHER" id="PTHR11228">
    <property type="entry name" value="RADICAL SAM DOMAIN PROTEIN"/>
    <property type="match status" value="1"/>
</dbReference>
<dbReference type="Pfam" id="PF04055">
    <property type="entry name" value="Radical_SAM"/>
    <property type="match status" value="1"/>
</dbReference>
<dbReference type="Pfam" id="PF13186">
    <property type="entry name" value="SPASM"/>
    <property type="match status" value="1"/>
</dbReference>
<dbReference type="PIRSF" id="PIRSF037420">
    <property type="entry name" value="PQQ_syn_pqqE"/>
    <property type="match status" value="1"/>
</dbReference>
<dbReference type="SFLD" id="SFLDF00280">
    <property type="entry name" value="coenzyme_PQQ_synthesis_protein"/>
    <property type="match status" value="1"/>
</dbReference>
<dbReference type="SFLD" id="SFLDG01067">
    <property type="entry name" value="SPASM/twitch_domain_containing"/>
    <property type="match status" value="1"/>
</dbReference>
<dbReference type="SUPFAM" id="SSF102114">
    <property type="entry name" value="Radical SAM enzymes"/>
    <property type="match status" value="1"/>
</dbReference>
<dbReference type="PROSITE" id="PS01305">
    <property type="entry name" value="MOAA_NIFB_PQQE"/>
    <property type="match status" value="1"/>
</dbReference>
<dbReference type="PROSITE" id="PS51918">
    <property type="entry name" value="RADICAL_SAM"/>
    <property type="match status" value="1"/>
</dbReference>
<protein>
    <recommendedName>
        <fullName evidence="1">PqqA peptide cyclase</fullName>
        <ecNumber evidence="1">1.21.98.4</ecNumber>
    </recommendedName>
    <alternativeName>
        <fullName evidence="1">Coenzyme PQQ synthesis protein E</fullName>
    </alternativeName>
    <alternativeName>
        <fullName evidence="1">Pyrroloquinoline quinone biosynthesis protein E</fullName>
    </alternativeName>
</protein>
<keyword id="KW-0004">4Fe-4S</keyword>
<keyword id="KW-0408">Iron</keyword>
<keyword id="KW-0411">Iron-sulfur</keyword>
<keyword id="KW-0479">Metal-binding</keyword>
<keyword id="KW-0560">Oxidoreductase</keyword>
<keyword id="KW-0884">PQQ biosynthesis</keyword>
<keyword id="KW-0949">S-adenosyl-L-methionine</keyword>
<reference key="1">
    <citation type="submission" date="2008-02" db="EMBL/GenBank/DDBJ databases">
        <title>Complete sequence of chromosome of Methylobacterium sp. 4-46.</title>
        <authorList>
            <consortium name="US DOE Joint Genome Institute"/>
            <person name="Copeland A."/>
            <person name="Lucas S."/>
            <person name="Lapidus A."/>
            <person name="Glavina del Rio T."/>
            <person name="Dalin E."/>
            <person name="Tice H."/>
            <person name="Bruce D."/>
            <person name="Goodwin L."/>
            <person name="Pitluck S."/>
            <person name="Chertkov O."/>
            <person name="Brettin T."/>
            <person name="Detter J.C."/>
            <person name="Han C."/>
            <person name="Kuske C.R."/>
            <person name="Schmutz J."/>
            <person name="Larimer F."/>
            <person name="Land M."/>
            <person name="Hauser L."/>
            <person name="Kyrpides N."/>
            <person name="Ivanova N."/>
            <person name="Marx C.J."/>
            <person name="Richardson P."/>
        </authorList>
    </citation>
    <scope>NUCLEOTIDE SEQUENCE [LARGE SCALE GENOMIC DNA]</scope>
    <source>
        <strain>4-46</strain>
    </source>
</reference>